<keyword id="KW-0143">Chaperone</keyword>
<keyword id="KW-0963">Cytoplasm</keyword>
<keyword id="KW-1185">Reference proteome</keyword>
<keyword id="KW-0690">Ribosome biogenesis</keyword>
<keyword id="KW-0698">rRNA processing</keyword>
<sequence length="172" mass="19824">MNYFNVGKIVNTQGLQGEMRVLSVTDFAEERFKKGNKLALFDKKDQFVMDVEIASHRKAKNFDIIKFKGMYHINDIEKFRDFSLKVAEEDLADLEDGEFYYHEIIGLEVYENDVLLGTIKEILQPGANDVWVVKRKGKRDLLLPYIPPVVLGINIEQGRVDVEIPEGLDDEN</sequence>
<organism>
    <name type="scientific">Streptococcus sanguinis (strain SK36)</name>
    <dbReference type="NCBI Taxonomy" id="388919"/>
    <lineage>
        <taxon>Bacteria</taxon>
        <taxon>Bacillati</taxon>
        <taxon>Bacillota</taxon>
        <taxon>Bacilli</taxon>
        <taxon>Lactobacillales</taxon>
        <taxon>Streptococcaceae</taxon>
        <taxon>Streptococcus</taxon>
    </lineage>
</organism>
<dbReference type="EMBL" id="CP000387">
    <property type="protein sequence ID" value="ABN44702.1"/>
    <property type="molecule type" value="Genomic_DNA"/>
</dbReference>
<dbReference type="RefSeq" id="WP_011837039.1">
    <property type="nucleotide sequence ID" value="NZ_CAXTYR010000001.1"/>
</dbReference>
<dbReference type="RefSeq" id="YP_001035252.1">
    <property type="nucleotide sequence ID" value="NC_009009.1"/>
</dbReference>
<dbReference type="SMR" id="A3CNE7"/>
<dbReference type="STRING" id="388919.SSA_1303"/>
<dbReference type="KEGG" id="ssa:SSA_1303"/>
<dbReference type="PATRIC" id="fig|388919.9.peg.1240"/>
<dbReference type="eggNOG" id="COG0806">
    <property type="taxonomic scope" value="Bacteria"/>
</dbReference>
<dbReference type="HOGENOM" id="CLU_077636_3_1_9"/>
<dbReference type="OrthoDB" id="9810331at2"/>
<dbReference type="Proteomes" id="UP000002148">
    <property type="component" value="Chromosome"/>
</dbReference>
<dbReference type="GO" id="GO:0005737">
    <property type="term" value="C:cytoplasm"/>
    <property type="evidence" value="ECO:0007669"/>
    <property type="project" value="UniProtKB-SubCell"/>
</dbReference>
<dbReference type="GO" id="GO:0005840">
    <property type="term" value="C:ribosome"/>
    <property type="evidence" value="ECO:0007669"/>
    <property type="project" value="InterPro"/>
</dbReference>
<dbReference type="GO" id="GO:0043022">
    <property type="term" value="F:ribosome binding"/>
    <property type="evidence" value="ECO:0007669"/>
    <property type="project" value="InterPro"/>
</dbReference>
<dbReference type="GO" id="GO:0042274">
    <property type="term" value="P:ribosomal small subunit biogenesis"/>
    <property type="evidence" value="ECO:0007669"/>
    <property type="project" value="UniProtKB-UniRule"/>
</dbReference>
<dbReference type="GO" id="GO:0006364">
    <property type="term" value="P:rRNA processing"/>
    <property type="evidence" value="ECO:0007669"/>
    <property type="project" value="UniProtKB-UniRule"/>
</dbReference>
<dbReference type="Gene3D" id="2.30.30.240">
    <property type="entry name" value="PRC-barrel domain"/>
    <property type="match status" value="1"/>
</dbReference>
<dbReference type="Gene3D" id="2.40.30.60">
    <property type="entry name" value="RimM"/>
    <property type="match status" value="1"/>
</dbReference>
<dbReference type="HAMAP" id="MF_00014">
    <property type="entry name" value="Ribosome_mat_RimM"/>
    <property type="match status" value="1"/>
</dbReference>
<dbReference type="InterPro" id="IPR027275">
    <property type="entry name" value="PRC-brl_dom"/>
</dbReference>
<dbReference type="InterPro" id="IPR011033">
    <property type="entry name" value="PRC_barrel-like_sf"/>
</dbReference>
<dbReference type="InterPro" id="IPR011961">
    <property type="entry name" value="RimM"/>
</dbReference>
<dbReference type="InterPro" id="IPR002676">
    <property type="entry name" value="RimM_N"/>
</dbReference>
<dbReference type="InterPro" id="IPR036976">
    <property type="entry name" value="RimM_N_sf"/>
</dbReference>
<dbReference type="InterPro" id="IPR009000">
    <property type="entry name" value="Transl_B-barrel_sf"/>
</dbReference>
<dbReference type="NCBIfam" id="TIGR02273">
    <property type="entry name" value="16S_RimM"/>
    <property type="match status" value="1"/>
</dbReference>
<dbReference type="PANTHER" id="PTHR33692">
    <property type="entry name" value="RIBOSOME MATURATION FACTOR RIMM"/>
    <property type="match status" value="1"/>
</dbReference>
<dbReference type="PANTHER" id="PTHR33692:SF1">
    <property type="entry name" value="RIBOSOME MATURATION FACTOR RIMM"/>
    <property type="match status" value="1"/>
</dbReference>
<dbReference type="Pfam" id="PF05239">
    <property type="entry name" value="PRC"/>
    <property type="match status" value="1"/>
</dbReference>
<dbReference type="Pfam" id="PF01782">
    <property type="entry name" value="RimM"/>
    <property type="match status" value="1"/>
</dbReference>
<dbReference type="SUPFAM" id="SSF50346">
    <property type="entry name" value="PRC-barrel domain"/>
    <property type="match status" value="1"/>
</dbReference>
<dbReference type="SUPFAM" id="SSF50447">
    <property type="entry name" value="Translation proteins"/>
    <property type="match status" value="1"/>
</dbReference>
<gene>
    <name evidence="1" type="primary">rimM</name>
    <name type="ordered locus">SSA_1303</name>
</gene>
<proteinExistence type="inferred from homology"/>
<feature type="chain" id="PRO_1000001239" description="Ribosome maturation factor RimM">
    <location>
        <begin position="1"/>
        <end position="172"/>
    </location>
</feature>
<feature type="domain" description="PRC barrel" evidence="1">
    <location>
        <begin position="96"/>
        <end position="168"/>
    </location>
</feature>
<comment type="function">
    <text evidence="1">An accessory protein needed during the final step in the assembly of 30S ribosomal subunit, possibly for assembly of the head region. Essential for efficient processing of 16S rRNA. May be needed both before and after RbfA during the maturation of 16S rRNA. It has affinity for free ribosomal 30S subunits but not for 70S ribosomes.</text>
</comment>
<comment type="subunit">
    <text evidence="1">Binds ribosomal protein uS19.</text>
</comment>
<comment type="subcellular location">
    <subcellularLocation>
        <location evidence="1">Cytoplasm</location>
    </subcellularLocation>
</comment>
<comment type="domain">
    <text evidence="1">The PRC barrel domain binds ribosomal protein uS19.</text>
</comment>
<comment type="similarity">
    <text evidence="1">Belongs to the RimM family.</text>
</comment>
<accession>A3CNE7</accession>
<reference key="1">
    <citation type="journal article" date="2007" name="J. Bacteriol.">
        <title>Genome of the opportunistic pathogen Streptococcus sanguinis.</title>
        <authorList>
            <person name="Xu P."/>
            <person name="Alves J.M."/>
            <person name="Kitten T."/>
            <person name="Brown A."/>
            <person name="Chen Z."/>
            <person name="Ozaki L.S."/>
            <person name="Manque P."/>
            <person name="Ge X."/>
            <person name="Serrano M.G."/>
            <person name="Puiu D."/>
            <person name="Hendricks S."/>
            <person name="Wang Y."/>
            <person name="Chaplin M.D."/>
            <person name="Akan D."/>
            <person name="Paik S."/>
            <person name="Peterson D.L."/>
            <person name="Macrina F.L."/>
            <person name="Buck G.A."/>
        </authorList>
    </citation>
    <scope>NUCLEOTIDE SEQUENCE [LARGE SCALE GENOMIC DNA]</scope>
    <source>
        <strain>SK36</strain>
    </source>
</reference>
<name>RIMM_STRSV</name>
<evidence type="ECO:0000255" key="1">
    <source>
        <dbReference type="HAMAP-Rule" id="MF_00014"/>
    </source>
</evidence>
<protein>
    <recommendedName>
        <fullName evidence="1">Ribosome maturation factor RimM</fullName>
    </recommendedName>
</protein>